<name>Y4276_ACAM1</name>
<gene>
    <name type="ordered locus">AM1_4276</name>
</gene>
<protein>
    <recommendedName>
        <fullName evidence="1">UPF0246 protein AM1_4276</fullName>
    </recommendedName>
</protein>
<reference key="1">
    <citation type="journal article" date="2008" name="Proc. Natl. Acad. Sci. U.S.A.">
        <title>Niche adaptation and genome expansion in the chlorophyll d-producing cyanobacterium Acaryochloris marina.</title>
        <authorList>
            <person name="Swingley W.D."/>
            <person name="Chen M."/>
            <person name="Cheung P.C."/>
            <person name="Conrad A.L."/>
            <person name="Dejesa L.C."/>
            <person name="Hao J."/>
            <person name="Honchak B.M."/>
            <person name="Karbach L.E."/>
            <person name="Kurdoglu A."/>
            <person name="Lahiri S."/>
            <person name="Mastrian S.D."/>
            <person name="Miyashita H."/>
            <person name="Page L."/>
            <person name="Ramakrishna P."/>
            <person name="Satoh S."/>
            <person name="Sattley W.M."/>
            <person name="Shimada Y."/>
            <person name="Taylor H.L."/>
            <person name="Tomo T."/>
            <person name="Tsuchiya T."/>
            <person name="Wang Z.T."/>
            <person name="Raymond J."/>
            <person name="Mimuro M."/>
            <person name="Blankenship R.E."/>
            <person name="Touchman J.W."/>
        </authorList>
    </citation>
    <scope>NUCLEOTIDE SEQUENCE [LARGE SCALE GENOMIC DNA]</scope>
    <source>
        <strain>MBIC 11017</strain>
    </source>
</reference>
<sequence length="252" mass="28575">MLMIISPSKTQNFDPRPGIDYTVPAQAARTQRLVKQLRQYSPEDLGKLMKISPKLSDLNWQRYQDFQDSFTQNNAKQALLAFKGDVYNGIEVDTYTPEDFTFAQNHLRILSGLYGLLKPLDLIQPYRLEMGTKLQTDKGKTLYDFWGAQITDALNADLASDTTLVNLASGEYFKAVQPQQLNGKVLNIAFKENKNGTYKVIGIHAKRARGLMVNYAIQNRITAPKALQAFDEEGYGFEPSLSTETEWVFCRN</sequence>
<keyword id="KW-1185">Reference proteome</keyword>
<evidence type="ECO:0000255" key="1">
    <source>
        <dbReference type="HAMAP-Rule" id="MF_00652"/>
    </source>
</evidence>
<organism>
    <name type="scientific">Acaryochloris marina (strain MBIC 11017)</name>
    <dbReference type="NCBI Taxonomy" id="329726"/>
    <lineage>
        <taxon>Bacteria</taxon>
        <taxon>Bacillati</taxon>
        <taxon>Cyanobacteriota</taxon>
        <taxon>Cyanophyceae</taxon>
        <taxon>Acaryochloridales</taxon>
        <taxon>Acaryochloridaceae</taxon>
        <taxon>Acaryochloris</taxon>
    </lineage>
</organism>
<accession>B0CDQ3</accession>
<feature type="chain" id="PRO_1000082761" description="UPF0246 protein AM1_4276">
    <location>
        <begin position="1"/>
        <end position="252"/>
    </location>
</feature>
<dbReference type="EMBL" id="CP000828">
    <property type="protein sequence ID" value="ABW29255.1"/>
    <property type="molecule type" value="Genomic_DNA"/>
</dbReference>
<dbReference type="SMR" id="B0CDQ3"/>
<dbReference type="KEGG" id="amr:AM1_4276"/>
<dbReference type="eggNOG" id="COG3022">
    <property type="taxonomic scope" value="Bacteria"/>
</dbReference>
<dbReference type="HOGENOM" id="CLU_061989_0_0_3"/>
<dbReference type="OrthoDB" id="9777133at2"/>
<dbReference type="Proteomes" id="UP000000268">
    <property type="component" value="Chromosome"/>
</dbReference>
<dbReference type="GO" id="GO:0005829">
    <property type="term" value="C:cytosol"/>
    <property type="evidence" value="ECO:0007669"/>
    <property type="project" value="TreeGrafter"/>
</dbReference>
<dbReference type="GO" id="GO:0033194">
    <property type="term" value="P:response to hydroperoxide"/>
    <property type="evidence" value="ECO:0007669"/>
    <property type="project" value="TreeGrafter"/>
</dbReference>
<dbReference type="HAMAP" id="MF_00652">
    <property type="entry name" value="UPF0246"/>
    <property type="match status" value="1"/>
</dbReference>
<dbReference type="InterPro" id="IPR005583">
    <property type="entry name" value="YaaA"/>
</dbReference>
<dbReference type="NCBIfam" id="NF002542">
    <property type="entry name" value="PRK02101.1-3"/>
    <property type="match status" value="1"/>
</dbReference>
<dbReference type="PANTHER" id="PTHR30283:SF4">
    <property type="entry name" value="PEROXIDE STRESS RESISTANCE PROTEIN YAAA"/>
    <property type="match status" value="1"/>
</dbReference>
<dbReference type="PANTHER" id="PTHR30283">
    <property type="entry name" value="PEROXIDE STRESS RESPONSE PROTEIN YAAA"/>
    <property type="match status" value="1"/>
</dbReference>
<dbReference type="Pfam" id="PF03883">
    <property type="entry name" value="H2O2_YaaD"/>
    <property type="match status" value="1"/>
</dbReference>
<comment type="similarity">
    <text evidence="1">Belongs to the UPF0246 family.</text>
</comment>
<proteinExistence type="inferred from homology"/>